<protein>
    <recommendedName>
        <fullName evidence="1">Ribose-5-phosphate isomerase A</fullName>
        <ecNumber evidence="1">5.3.1.6</ecNumber>
    </recommendedName>
    <alternativeName>
        <fullName evidence="1">Phosphoriboisomerase A</fullName>
        <shortName evidence="1">PRI</shortName>
    </alternativeName>
</protein>
<feature type="chain" id="PRO_1000016962" description="Ribose-5-phosphate isomerase A">
    <location>
        <begin position="1"/>
        <end position="223"/>
    </location>
</feature>
<feature type="active site" description="Proton acceptor" evidence="1">
    <location>
        <position position="107"/>
    </location>
</feature>
<feature type="binding site" evidence="1">
    <location>
        <begin position="32"/>
        <end position="35"/>
    </location>
    <ligand>
        <name>substrate</name>
    </ligand>
</feature>
<feature type="binding site" evidence="1">
    <location>
        <begin position="85"/>
        <end position="88"/>
    </location>
    <ligand>
        <name>substrate</name>
    </ligand>
</feature>
<feature type="binding site" evidence="1">
    <location>
        <begin position="98"/>
        <end position="101"/>
    </location>
    <ligand>
        <name>substrate</name>
    </ligand>
</feature>
<feature type="binding site" evidence="1">
    <location>
        <position position="125"/>
    </location>
    <ligand>
        <name>substrate</name>
    </ligand>
</feature>
<evidence type="ECO:0000255" key="1">
    <source>
        <dbReference type="HAMAP-Rule" id="MF_00170"/>
    </source>
</evidence>
<dbReference type="EC" id="5.3.1.6" evidence="1"/>
<dbReference type="EMBL" id="CP000744">
    <property type="protein sequence ID" value="ABR82238.1"/>
    <property type="molecule type" value="Genomic_DNA"/>
</dbReference>
<dbReference type="RefSeq" id="WP_003148607.1">
    <property type="nucleotide sequence ID" value="NC_009656.1"/>
</dbReference>
<dbReference type="SMR" id="A6UYD2"/>
<dbReference type="GeneID" id="77218850"/>
<dbReference type="KEGG" id="pap:PSPA7_0422"/>
<dbReference type="HOGENOM" id="CLU_056590_1_1_6"/>
<dbReference type="UniPathway" id="UPA00115">
    <property type="reaction ID" value="UER00412"/>
</dbReference>
<dbReference type="Proteomes" id="UP000001582">
    <property type="component" value="Chromosome"/>
</dbReference>
<dbReference type="GO" id="GO:0005829">
    <property type="term" value="C:cytosol"/>
    <property type="evidence" value="ECO:0007669"/>
    <property type="project" value="TreeGrafter"/>
</dbReference>
<dbReference type="GO" id="GO:0004751">
    <property type="term" value="F:ribose-5-phosphate isomerase activity"/>
    <property type="evidence" value="ECO:0007669"/>
    <property type="project" value="UniProtKB-UniRule"/>
</dbReference>
<dbReference type="GO" id="GO:0006014">
    <property type="term" value="P:D-ribose metabolic process"/>
    <property type="evidence" value="ECO:0007669"/>
    <property type="project" value="TreeGrafter"/>
</dbReference>
<dbReference type="GO" id="GO:0009052">
    <property type="term" value="P:pentose-phosphate shunt, non-oxidative branch"/>
    <property type="evidence" value="ECO:0007669"/>
    <property type="project" value="UniProtKB-UniRule"/>
</dbReference>
<dbReference type="CDD" id="cd01398">
    <property type="entry name" value="RPI_A"/>
    <property type="match status" value="1"/>
</dbReference>
<dbReference type="FunFam" id="3.30.70.260:FF:000004">
    <property type="entry name" value="Ribose-5-phosphate isomerase A"/>
    <property type="match status" value="1"/>
</dbReference>
<dbReference type="FunFam" id="3.40.50.1360:FF:000001">
    <property type="entry name" value="Ribose-5-phosphate isomerase A"/>
    <property type="match status" value="1"/>
</dbReference>
<dbReference type="Gene3D" id="3.30.70.260">
    <property type="match status" value="1"/>
</dbReference>
<dbReference type="Gene3D" id="3.40.50.1360">
    <property type="match status" value="1"/>
</dbReference>
<dbReference type="HAMAP" id="MF_00170">
    <property type="entry name" value="Rib_5P_isom_A"/>
    <property type="match status" value="1"/>
</dbReference>
<dbReference type="InterPro" id="IPR037171">
    <property type="entry name" value="NagB/RpiA_transferase-like"/>
</dbReference>
<dbReference type="InterPro" id="IPR020672">
    <property type="entry name" value="Ribose5P_isomerase_typA_subgr"/>
</dbReference>
<dbReference type="InterPro" id="IPR004788">
    <property type="entry name" value="Ribose5P_isomerase_type_A"/>
</dbReference>
<dbReference type="NCBIfam" id="NF001924">
    <property type="entry name" value="PRK00702.1"/>
    <property type="match status" value="1"/>
</dbReference>
<dbReference type="NCBIfam" id="TIGR00021">
    <property type="entry name" value="rpiA"/>
    <property type="match status" value="1"/>
</dbReference>
<dbReference type="PANTHER" id="PTHR11934">
    <property type="entry name" value="RIBOSE-5-PHOSPHATE ISOMERASE"/>
    <property type="match status" value="1"/>
</dbReference>
<dbReference type="PANTHER" id="PTHR11934:SF0">
    <property type="entry name" value="RIBOSE-5-PHOSPHATE ISOMERASE"/>
    <property type="match status" value="1"/>
</dbReference>
<dbReference type="Pfam" id="PF06026">
    <property type="entry name" value="Rib_5-P_isom_A"/>
    <property type="match status" value="1"/>
</dbReference>
<dbReference type="SUPFAM" id="SSF75445">
    <property type="entry name" value="D-ribose-5-phosphate isomerase (RpiA), lid domain"/>
    <property type="match status" value="1"/>
</dbReference>
<dbReference type="SUPFAM" id="SSF100950">
    <property type="entry name" value="NagB/RpiA/CoA transferase-like"/>
    <property type="match status" value="1"/>
</dbReference>
<reference key="1">
    <citation type="submission" date="2007-06" db="EMBL/GenBank/DDBJ databases">
        <authorList>
            <person name="Dodson R.J."/>
            <person name="Harkins D."/>
            <person name="Paulsen I.T."/>
        </authorList>
    </citation>
    <scope>NUCLEOTIDE SEQUENCE [LARGE SCALE GENOMIC DNA]</scope>
    <source>
        <strain>DSM 24068 / PA7</strain>
    </source>
</reference>
<gene>
    <name evidence="1" type="primary">rpiA</name>
    <name type="ordered locus">PSPA7_0422</name>
</gene>
<organism>
    <name type="scientific">Pseudomonas paraeruginosa (strain DSM 24068 / PA7)</name>
    <name type="common">Pseudomonas aeruginosa (strain PA7)</name>
    <dbReference type="NCBI Taxonomy" id="381754"/>
    <lineage>
        <taxon>Bacteria</taxon>
        <taxon>Pseudomonadati</taxon>
        <taxon>Pseudomonadota</taxon>
        <taxon>Gammaproteobacteria</taxon>
        <taxon>Pseudomonadales</taxon>
        <taxon>Pseudomonadaceae</taxon>
        <taxon>Pseudomonas</taxon>
        <taxon>Pseudomonas paraeruginosa</taxon>
    </lineage>
</organism>
<proteinExistence type="inferred from homology"/>
<accession>A6UYD2</accession>
<name>RPIA_PSEP7</name>
<sequence>MNQDQLKQAVAQAAVDHILPHLDSKSIVGVGTGSTANFFIDALARHKAEFDGAVASSEATAKRLKEHGIPVYELNTVSELEFYVDGADESNERLELIKGGGAALTREKIVAAVARTFICIADASKLVPILGQFPLPVEVIPMARSHVARQLVKLGGDPVYREGVLTDNGNIILDVHNLRIDSPVELEEKINAIVGVVTNGLFAARPADLLLLGTADGVQTLKA</sequence>
<comment type="function">
    <text evidence="1">Catalyzes the reversible conversion of ribose-5-phosphate to ribulose 5-phosphate.</text>
</comment>
<comment type="catalytic activity">
    <reaction evidence="1">
        <text>aldehydo-D-ribose 5-phosphate = D-ribulose 5-phosphate</text>
        <dbReference type="Rhea" id="RHEA:14657"/>
        <dbReference type="ChEBI" id="CHEBI:58121"/>
        <dbReference type="ChEBI" id="CHEBI:58273"/>
        <dbReference type="EC" id="5.3.1.6"/>
    </reaction>
</comment>
<comment type="pathway">
    <text evidence="1">Carbohydrate degradation; pentose phosphate pathway; D-ribose 5-phosphate from D-ribulose 5-phosphate (non-oxidative stage): step 1/1.</text>
</comment>
<comment type="subunit">
    <text evidence="1">Homodimer.</text>
</comment>
<comment type="similarity">
    <text evidence="1">Belongs to the ribose 5-phosphate isomerase family.</text>
</comment>
<keyword id="KW-0413">Isomerase</keyword>